<reference key="1">
    <citation type="journal article" date="2002" name="Proc. Natl. Acad. Sci. U.S.A.">
        <title>Extensive mosaic structure revealed by the complete genome sequence of uropathogenic Escherichia coli.</title>
        <authorList>
            <person name="Welch R.A."/>
            <person name="Burland V."/>
            <person name="Plunkett G. III"/>
            <person name="Redford P."/>
            <person name="Roesch P."/>
            <person name="Rasko D."/>
            <person name="Buckles E.L."/>
            <person name="Liou S.-R."/>
            <person name="Boutin A."/>
            <person name="Hackett J."/>
            <person name="Stroud D."/>
            <person name="Mayhew G.F."/>
            <person name="Rose D.J."/>
            <person name="Zhou S."/>
            <person name="Schwartz D.C."/>
            <person name="Perna N.T."/>
            <person name="Mobley H.L.T."/>
            <person name="Donnenberg M.S."/>
            <person name="Blattner F.R."/>
        </authorList>
    </citation>
    <scope>NUCLEOTIDE SEQUENCE [LARGE SCALE GENOMIC DNA]</scope>
    <source>
        <strain>CFT073 / ATCC 700928 / UPEC</strain>
    </source>
</reference>
<accession>P69229</accession>
<accession>P30846</accession>
<organism>
    <name type="scientific">Escherichia coli O6:H1 (strain CFT073 / ATCC 700928 / UPEC)</name>
    <dbReference type="NCBI Taxonomy" id="199310"/>
    <lineage>
        <taxon>Bacteria</taxon>
        <taxon>Pseudomonadati</taxon>
        <taxon>Pseudomonadota</taxon>
        <taxon>Gammaproteobacteria</taxon>
        <taxon>Enterobacterales</taxon>
        <taxon>Enterobacteriaceae</taxon>
        <taxon>Escherichia</taxon>
    </lineage>
</organism>
<protein>
    <recommendedName>
        <fullName>Transcriptional regulatory protein BaeR</fullName>
    </recommendedName>
</protein>
<sequence>MTELPIDENTPRILIVEDEPKLGQLLIDYLRAASYAPTLISHGDQVLPYVRQTPPDLILLDLMLPGTDGLTLCREIRRFSDIPIVMVTAKIEEIDRLLGLEIGADDYICKPYSPREVVARVKTILRRCKPQRELQQQDAESPLIIDEGRFQASWRGKMLDLTPAEFRLLKTLSHEPGKVFSREQLLNHLYDDYRVVTDRTIDSHIKNLRRKLESLDAEQSFIRAVYGVGYRWEADACRIV</sequence>
<proteinExistence type="evidence at protein level"/>
<evidence type="ECO:0000250" key="1"/>
<evidence type="ECO:0000255" key="2">
    <source>
        <dbReference type="PROSITE-ProRule" id="PRU00169"/>
    </source>
</evidence>
<evidence type="ECO:0000255" key="3">
    <source>
        <dbReference type="PROSITE-ProRule" id="PRU01091"/>
    </source>
</evidence>
<evidence type="ECO:0000305" key="4"/>
<evidence type="ECO:0007829" key="5">
    <source>
        <dbReference type="PDB" id="4B09"/>
    </source>
</evidence>
<keyword id="KW-0002">3D-structure</keyword>
<keyword id="KW-0963">Cytoplasm</keyword>
<keyword id="KW-0238">DNA-binding</keyword>
<keyword id="KW-0597">Phosphoprotein</keyword>
<keyword id="KW-1185">Reference proteome</keyword>
<keyword id="KW-0804">Transcription</keyword>
<keyword id="KW-0805">Transcription regulation</keyword>
<keyword id="KW-0902">Two-component regulatory system</keyword>
<gene>
    <name type="primary">baeR</name>
    <name type="ordered locus">c2605</name>
</gene>
<name>BAER_ECOL6</name>
<comment type="function">
    <text evidence="1">Member of the two-component regulatory system BaeS/BaeR. Activates the mdtABCD operon (By similarity).</text>
</comment>
<comment type="subcellular location">
    <subcellularLocation>
        <location evidence="4">Cytoplasm</location>
    </subcellularLocation>
</comment>
<comment type="PTM">
    <text evidence="1">Phosphorylated by BaeS.</text>
</comment>
<feature type="chain" id="PRO_0000081022" description="Transcriptional regulatory protein BaeR">
    <location>
        <begin position="1"/>
        <end position="240"/>
    </location>
</feature>
<feature type="domain" description="Response regulatory" evidence="2">
    <location>
        <begin position="12"/>
        <end position="125"/>
    </location>
</feature>
<feature type="DNA-binding region" description="OmpR/PhoB-type" evidence="3">
    <location>
        <begin position="131"/>
        <end position="234"/>
    </location>
</feature>
<feature type="modified residue" description="4-aspartylphosphate" evidence="2">
    <location>
        <position position="61"/>
    </location>
</feature>
<feature type="strand" evidence="5">
    <location>
        <begin position="12"/>
        <end position="16"/>
    </location>
</feature>
<feature type="helix" evidence="5">
    <location>
        <begin position="20"/>
        <end position="32"/>
    </location>
</feature>
<feature type="strand" evidence="5">
    <location>
        <begin position="36"/>
        <end position="40"/>
    </location>
</feature>
<feature type="helix" evidence="5">
    <location>
        <begin position="46"/>
        <end position="52"/>
    </location>
</feature>
<feature type="strand" evidence="5">
    <location>
        <begin position="56"/>
        <end position="61"/>
    </location>
</feature>
<feature type="helix" evidence="5">
    <location>
        <begin position="68"/>
        <end position="79"/>
    </location>
</feature>
<feature type="strand" evidence="5">
    <location>
        <begin position="84"/>
        <end position="87"/>
    </location>
</feature>
<feature type="strand" evidence="5">
    <location>
        <begin position="104"/>
        <end position="108"/>
    </location>
</feature>
<feature type="helix" evidence="5">
    <location>
        <begin position="114"/>
        <end position="124"/>
    </location>
</feature>
<feature type="strand" evidence="5">
    <location>
        <begin position="143"/>
        <end position="146"/>
    </location>
</feature>
<feature type="turn" evidence="5">
    <location>
        <begin position="147"/>
        <end position="150"/>
    </location>
</feature>
<feature type="strand" evidence="5">
    <location>
        <begin position="151"/>
        <end position="154"/>
    </location>
</feature>
<feature type="helix" evidence="5">
    <location>
        <begin position="163"/>
        <end position="174"/>
    </location>
</feature>
<feature type="helix" evidence="5">
    <location>
        <begin position="182"/>
        <end position="191"/>
    </location>
</feature>
<feature type="helix" evidence="5">
    <location>
        <begin position="201"/>
        <end position="215"/>
    </location>
</feature>
<feature type="strand" evidence="5">
    <location>
        <begin position="217"/>
        <end position="219"/>
    </location>
</feature>
<feature type="strand" evidence="5">
    <location>
        <begin position="222"/>
        <end position="225"/>
    </location>
</feature>
<feature type="turn" evidence="5">
    <location>
        <begin position="226"/>
        <end position="228"/>
    </location>
</feature>
<feature type="strand" evidence="5">
    <location>
        <begin position="229"/>
        <end position="232"/>
    </location>
</feature>
<feature type="strand" evidence="5">
    <location>
        <begin position="238"/>
        <end position="240"/>
    </location>
</feature>
<dbReference type="EMBL" id="AE014075">
    <property type="protein sequence ID" value="AAN81061.1"/>
    <property type="molecule type" value="Genomic_DNA"/>
</dbReference>
<dbReference type="RefSeq" id="WP_000137877.1">
    <property type="nucleotide sequence ID" value="NZ_CP051263.1"/>
</dbReference>
<dbReference type="PDB" id="4B09">
    <property type="method" value="X-ray"/>
    <property type="resolution" value="3.30 A"/>
    <property type="chains" value="A/B/C/D/E/F/G/H/I/J/K/L=1-240"/>
</dbReference>
<dbReference type="PDBsum" id="4B09"/>
<dbReference type="SMR" id="P69229"/>
<dbReference type="STRING" id="199310.c2605"/>
<dbReference type="GeneID" id="75056798"/>
<dbReference type="KEGG" id="ecc:c2605"/>
<dbReference type="eggNOG" id="COG0745">
    <property type="taxonomic scope" value="Bacteria"/>
</dbReference>
<dbReference type="HOGENOM" id="CLU_000445_30_4_6"/>
<dbReference type="BioCyc" id="ECOL199310:C2605-MONOMER"/>
<dbReference type="EvolutionaryTrace" id="P69229"/>
<dbReference type="Proteomes" id="UP000001410">
    <property type="component" value="Chromosome"/>
</dbReference>
<dbReference type="GO" id="GO:0005829">
    <property type="term" value="C:cytosol"/>
    <property type="evidence" value="ECO:0007669"/>
    <property type="project" value="TreeGrafter"/>
</dbReference>
<dbReference type="GO" id="GO:0032993">
    <property type="term" value="C:protein-DNA complex"/>
    <property type="evidence" value="ECO:0007669"/>
    <property type="project" value="TreeGrafter"/>
</dbReference>
<dbReference type="GO" id="GO:0000156">
    <property type="term" value="F:phosphorelay response regulator activity"/>
    <property type="evidence" value="ECO:0007669"/>
    <property type="project" value="TreeGrafter"/>
</dbReference>
<dbReference type="GO" id="GO:0000976">
    <property type="term" value="F:transcription cis-regulatory region binding"/>
    <property type="evidence" value="ECO:0007669"/>
    <property type="project" value="TreeGrafter"/>
</dbReference>
<dbReference type="GO" id="GO:0006355">
    <property type="term" value="P:regulation of DNA-templated transcription"/>
    <property type="evidence" value="ECO:0007669"/>
    <property type="project" value="InterPro"/>
</dbReference>
<dbReference type="CDD" id="cd19938">
    <property type="entry name" value="REC_OmpR_BaeR-like"/>
    <property type="match status" value="1"/>
</dbReference>
<dbReference type="CDD" id="cd00383">
    <property type="entry name" value="trans_reg_C"/>
    <property type="match status" value="1"/>
</dbReference>
<dbReference type="FunFam" id="1.10.10.10:FF:000117">
    <property type="entry name" value="Two-component system response regulator BaeR"/>
    <property type="match status" value="1"/>
</dbReference>
<dbReference type="FunFam" id="3.40.50.2300:FF:000080">
    <property type="entry name" value="Two-component system response regulator BaeR"/>
    <property type="match status" value="1"/>
</dbReference>
<dbReference type="Gene3D" id="3.40.50.2300">
    <property type="match status" value="1"/>
</dbReference>
<dbReference type="Gene3D" id="6.10.250.690">
    <property type="match status" value="1"/>
</dbReference>
<dbReference type="Gene3D" id="1.10.10.10">
    <property type="entry name" value="Winged helix-like DNA-binding domain superfamily/Winged helix DNA-binding domain"/>
    <property type="match status" value="1"/>
</dbReference>
<dbReference type="InterPro" id="IPR011006">
    <property type="entry name" value="CheY-like_superfamily"/>
</dbReference>
<dbReference type="InterPro" id="IPR001867">
    <property type="entry name" value="OmpR/PhoB-type_DNA-bd"/>
</dbReference>
<dbReference type="InterPro" id="IPR016032">
    <property type="entry name" value="Sig_transdc_resp-reg_C-effctor"/>
</dbReference>
<dbReference type="InterPro" id="IPR001789">
    <property type="entry name" value="Sig_transdc_resp-reg_receiver"/>
</dbReference>
<dbReference type="InterPro" id="IPR039420">
    <property type="entry name" value="WalR-like"/>
</dbReference>
<dbReference type="InterPro" id="IPR036388">
    <property type="entry name" value="WH-like_DNA-bd_sf"/>
</dbReference>
<dbReference type="NCBIfam" id="NF007982">
    <property type="entry name" value="PRK10710.1"/>
    <property type="match status" value="1"/>
</dbReference>
<dbReference type="PANTHER" id="PTHR48111">
    <property type="entry name" value="REGULATOR OF RPOS"/>
    <property type="match status" value="1"/>
</dbReference>
<dbReference type="PANTHER" id="PTHR48111:SF59">
    <property type="entry name" value="TRANSCRIPTIONAL REGULATORY PROTEIN BAER"/>
    <property type="match status" value="1"/>
</dbReference>
<dbReference type="Pfam" id="PF00072">
    <property type="entry name" value="Response_reg"/>
    <property type="match status" value="1"/>
</dbReference>
<dbReference type="Pfam" id="PF00486">
    <property type="entry name" value="Trans_reg_C"/>
    <property type="match status" value="1"/>
</dbReference>
<dbReference type="SMART" id="SM00448">
    <property type="entry name" value="REC"/>
    <property type="match status" value="1"/>
</dbReference>
<dbReference type="SMART" id="SM00862">
    <property type="entry name" value="Trans_reg_C"/>
    <property type="match status" value="1"/>
</dbReference>
<dbReference type="SUPFAM" id="SSF46894">
    <property type="entry name" value="C-terminal effector domain of the bipartite response regulators"/>
    <property type="match status" value="1"/>
</dbReference>
<dbReference type="SUPFAM" id="SSF52172">
    <property type="entry name" value="CheY-like"/>
    <property type="match status" value="1"/>
</dbReference>
<dbReference type="PROSITE" id="PS51755">
    <property type="entry name" value="OMPR_PHOB"/>
    <property type="match status" value="1"/>
</dbReference>
<dbReference type="PROSITE" id="PS50110">
    <property type="entry name" value="RESPONSE_REGULATORY"/>
    <property type="match status" value="1"/>
</dbReference>